<organism>
    <name type="scientific">Actinobacillus pleuropneumoniae serotype 7 (strain AP76)</name>
    <dbReference type="NCBI Taxonomy" id="537457"/>
    <lineage>
        <taxon>Bacteria</taxon>
        <taxon>Pseudomonadati</taxon>
        <taxon>Pseudomonadota</taxon>
        <taxon>Gammaproteobacteria</taxon>
        <taxon>Pasteurellales</taxon>
        <taxon>Pasteurellaceae</taxon>
        <taxon>Actinobacillus</taxon>
    </lineage>
</organism>
<accession>B3H0R2</accession>
<comment type="function">
    <text evidence="1">Catalyzes the conversion of uracil and 5-phospho-alpha-D-ribose 1-diphosphate (PRPP) to UMP and diphosphate.</text>
</comment>
<comment type="catalytic activity">
    <reaction evidence="1">
        <text>UMP + diphosphate = 5-phospho-alpha-D-ribose 1-diphosphate + uracil</text>
        <dbReference type="Rhea" id="RHEA:13017"/>
        <dbReference type="ChEBI" id="CHEBI:17568"/>
        <dbReference type="ChEBI" id="CHEBI:33019"/>
        <dbReference type="ChEBI" id="CHEBI:57865"/>
        <dbReference type="ChEBI" id="CHEBI:58017"/>
        <dbReference type="EC" id="2.4.2.9"/>
    </reaction>
</comment>
<comment type="cofactor">
    <cofactor evidence="1">
        <name>Mg(2+)</name>
        <dbReference type="ChEBI" id="CHEBI:18420"/>
    </cofactor>
    <text evidence="1">Binds 1 Mg(2+) ion per subunit. The magnesium is bound as Mg-PRPP.</text>
</comment>
<comment type="activity regulation">
    <text evidence="1">Allosterically activated by GTP.</text>
</comment>
<comment type="pathway">
    <text evidence="1">Pyrimidine metabolism; UMP biosynthesis via salvage pathway; UMP from uracil: step 1/1.</text>
</comment>
<comment type="similarity">
    <text evidence="1">Belongs to the UPRTase family.</text>
</comment>
<dbReference type="EC" id="2.4.2.9" evidence="1"/>
<dbReference type="EMBL" id="CP001091">
    <property type="protein sequence ID" value="ACE61074.1"/>
    <property type="molecule type" value="Genomic_DNA"/>
</dbReference>
<dbReference type="RefSeq" id="WP_005596420.1">
    <property type="nucleotide sequence ID" value="NC_010939.1"/>
</dbReference>
<dbReference type="SMR" id="B3H0R2"/>
<dbReference type="GeneID" id="48598564"/>
<dbReference type="KEGG" id="apa:APP7_0422"/>
<dbReference type="HOGENOM" id="CLU_067096_2_2_6"/>
<dbReference type="UniPathway" id="UPA00574">
    <property type="reaction ID" value="UER00636"/>
</dbReference>
<dbReference type="Proteomes" id="UP000001226">
    <property type="component" value="Chromosome"/>
</dbReference>
<dbReference type="GO" id="GO:0005525">
    <property type="term" value="F:GTP binding"/>
    <property type="evidence" value="ECO:0007669"/>
    <property type="project" value="UniProtKB-KW"/>
</dbReference>
<dbReference type="GO" id="GO:0000287">
    <property type="term" value="F:magnesium ion binding"/>
    <property type="evidence" value="ECO:0007669"/>
    <property type="project" value="UniProtKB-UniRule"/>
</dbReference>
<dbReference type="GO" id="GO:0004845">
    <property type="term" value="F:uracil phosphoribosyltransferase activity"/>
    <property type="evidence" value="ECO:0007669"/>
    <property type="project" value="UniProtKB-UniRule"/>
</dbReference>
<dbReference type="GO" id="GO:0044206">
    <property type="term" value="P:UMP salvage"/>
    <property type="evidence" value="ECO:0007669"/>
    <property type="project" value="UniProtKB-UniRule"/>
</dbReference>
<dbReference type="GO" id="GO:0006223">
    <property type="term" value="P:uracil salvage"/>
    <property type="evidence" value="ECO:0007669"/>
    <property type="project" value="InterPro"/>
</dbReference>
<dbReference type="CDD" id="cd06223">
    <property type="entry name" value="PRTases_typeI"/>
    <property type="match status" value="1"/>
</dbReference>
<dbReference type="FunFam" id="3.40.50.2020:FF:000003">
    <property type="entry name" value="Uracil phosphoribosyltransferase"/>
    <property type="match status" value="1"/>
</dbReference>
<dbReference type="Gene3D" id="3.40.50.2020">
    <property type="match status" value="1"/>
</dbReference>
<dbReference type="HAMAP" id="MF_01218_B">
    <property type="entry name" value="Upp_B"/>
    <property type="match status" value="1"/>
</dbReference>
<dbReference type="InterPro" id="IPR000836">
    <property type="entry name" value="PRibTrfase_dom"/>
</dbReference>
<dbReference type="InterPro" id="IPR029057">
    <property type="entry name" value="PRTase-like"/>
</dbReference>
<dbReference type="InterPro" id="IPR034332">
    <property type="entry name" value="Upp_B"/>
</dbReference>
<dbReference type="InterPro" id="IPR050054">
    <property type="entry name" value="UPRTase/APRTase"/>
</dbReference>
<dbReference type="InterPro" id="IPR005765">
    <property type="entry name" value="Ura_phspho_trans"/>
</dbReference>
<dbReference type="NCBIfam" id="NF001097">
    <property type="entry name" value="PRK00129.1"/>
    <property type="match status" value="1"/>
</dbReference>
<dbReference type="NCBIfam" id="TIGR01091">
    <property type="entry name" value="upp"/>
    <property type="match status" value="1"/>
</dbReference>
<dbReference type="PANTHER" id="PTHR32315">
    <property type="entry name" value="ADENINE PHOSPHORIBOSYLTRANSFERASE"/>
    <property type="match status" value="1"/>
</dbReference>
<dbReference type="PANTHER" id="PTHR32315:SF4">
    <property type="entry name" value="URACIL PHOSPHORIBOSYLTRANSFERASE, CHLOROPLASTIC"/>
    <property type="match status" value="1"/>
</dbReference>
<dbReference type="Pfam" id="PF14681">
    <property type="entry name" value="UPRTase"/>
    <property type="match status" value="1"/>
</dbReference>
<dbReference type="SUPFAM" id="SSF53271">
    <property type="entry name" value="PRTase-like"/>
    <property type="match status" value="1"/>
</dbReference>
<protein>
    <recommendedName>
        <fullName evidence="1">Uracil phosphoribosyltransferase</fullName>
        <ecNumber evidence="1">2.4.2.9</ecNumber>
    </recommendedName>
    <alternativeName>
        <fullName evidence="1">UMP pyrophosphorylase</fullName>
    </alternativeName>
    <alternativeName>
        <fullName evidence="1">UPRTase</fullName>
    </alternativeName>
</protein>
<proteinExistence type="inferred from homology"/>
<reference key="1">
    <citation type="submission" date="2008-06" db="EMBL/GenBank/DDBJ databases">
        <title>Genome and proteome analysis of A. pleuropneumoniae serotype 7.</title>
        <authorList>
            <person name="Linke B."/>
            <person name="Buettner F."/>
            <person name="Martinez-Arias R."/>
            <person name="Goesmann A."/>
            <person name="Baltes N."/>
            <person name="Tegetmeyer H."/>
            <person name="Singh M."/>
            <person name="Gerlach G.F."/>
        </authorList>
    </citation>
    <scope>NUCLEOTIDE SEQUENCE [LARGE SCALE GENOMIC DNA]</scope>
    <source>
        <strain>AP76</strain>
    </source>
</reference>
<keyword id="KW-0021">Allosteric enzyme</keyword>
<keyword id="KW-0328">Glycosyltransferase</keyword>
<keyword id="KW-0342">GTP-binding</keyword>
<keyword id="KW-0460">Magnesium</keyword>
<keyword id="KW-0547">Nucleotide-binding</keyword>
<keyword id="KW-0808">Transferase</keyword>
<feature type="chain" id="PRO_1000139088" description="Uracil phosphoribosyltransferase">
    <location>
        <begin position="1"/>
        <end position="208"/>
    </location>
</feature>
<feature type="binding site" evidence="1">
    <location>
        <position position="78"/>
    </location>
    <ligand>
        <name>5-phospho-alpha-D-ribose 1-diphosphate</name>
        <dbReference type="ChEBI" id="CHEBI:58017"/>
    </ligand>
</feature>
<feature type="binding site" evidence="1">
    <location>
        <position position="103"/>
    </location>
    <ligand>
        <name>5-phospho-alpha-D-ribose 1-diphosphate</name>
        <dbReference type="ChEBI" id="CHEBI:58017"/>
    </ligand>
</feature>
<feature type="binding site" evidence="1">
    <location>
        <begin position="130"/>
        <end position="138"/>
    </location>
    <ligand>
        <name>5-phospho-alpha-D-ribose 1-diphosphate</name>
        <dbReference type="ChEBI" id="CHEBI:58017"/>
    </ligand>
</feature>
<feature type="binding site" evidence="1">
    <location>
        <position position="193"/>
    </location>
    <ligand>
        <name>uracil</name>
        <dbReference type="ChEBI" id="CHEBI:17568"/>
    </ligand>
</feature>
<feature type="binding site" evidence="1">
    <location>
        <begin position="198"/>
        <end position="200"/>
    </location>
    <ligand>
        <name>uracil</name>
        <dbReference type="ChEBI" id="CHEBI:17568"/>
    </ligand>
</feature>
<feature type="binding site" evidence="1">
    <location>
        <position position="199"/>
    </location>
    <ligand>
        <name>5-phospho-alpha-D-ribose 1-diphosphate</name>
        <dbReference type="ChEBI" id="CHEBI:58017"/>
    </ligand>
</feature>
<evidence type="ECO:0000255" key="1">
    <source>
        <dbReference type="HAMAP-Rule" id="MF_01218"/>
    </source>
</evidence>
<name>UPP_ACTP7</name>
<gene>
    <name evidence="1" type="primary">upp</name>
    <name type="ordered locus">APP7_0422</name>
</gene>
<sequence length="208" mass="22508">MKIVEVKHPLVKHKLGLMRAADINTKDFRALATEVGSLLTYEATTDLETEAIEIDGWCGKVEVERIKGKKVTVVPILRAGLGMMDGVLEHIPSARISVVGIYRNEETLEPVPYFTKLANDVEERLAIIVDPMLATGGSMIATIDLLKKAGCKQIKVLVLVAAPEGIKALEAAHPDVELYTASIDSHLNEHGYIVPGLGDAGDKIFGTK</sequence>